<protein>
    <recommendedName>
        <fullName evidence="1">Fluoride-specific ion channel FluC</fullName>
    </recommendedName>
</protein>
<accession>B5Z8M0</accession>
<feature type="chain" id="PRO_1000125135" description="Fluoride-specific ion channel FluC">
    <location>
        <begin position="1"/>
        <end position="130"/>
    </location>
</feature>
<feature type="transmembrane region" description="Helical" evidence="1">
    <location>
        <begin position="3"/>
        <end position="23"/>
    </location>
</feature>
<feature type="transmembrane region" description="Helical" evidence="1">
    <location>
        <begin position="38"/>
        <end position="58"/>
    </location>
</feature>
<feature type="transmembrane region" description="Helical" evidence="1">
    <location>
        <begin position="67"/>
        <end position="87"/>
    </location>
</feature>
<feature type="transmembrane region" description="Helical" evidence="1">
    <location>
        <begin position="102"/>
        <end position="122"/>
    </location>
</feature>
<feature type="binding site" evidence="1">
    <location>
        <position position="77"/>
    </location>
    <ligand>
        <name>Na(+)</name>
        <dbReference type="ChEBI" id="CHEBI:29101"/>
        <note>structural</note>
    </ligand>
</feature>
<feature type="binding site" evidence="1">
    <location>
        <position position="80"/>
    </location>
    <ligand>
        <name>Na(+)</name>
        <dbReference type="ChEBI" id="CHEBI:29101"/>
        <note>structural</note>
    </ligand>
</feature>
<gene>
    <name evidence="1" type="primary">fluC</name>
    <name evidence="1" type="synonym">crcB</name>
    <name type="ordered locus">HPG27_1169</name>
</gene>
<dbReference type="EMBL" id="CP001173">
    <property type="protein sequence ID" value="ACI27919.1"/>
    <property type="molecule type" value="Genomic_DNA"/>
</dbReference>
<dbReference type="RefSeq" id="WP_001011980.1">
    <property type="nucleotide sequence ID" value="NC_011333.1"/>
</dbReference>
<dbReference type="SMR" id="B5Z8M0"/>
<dbReference type="KEGG" id="hpg:HPG27_1169"/>
<dbReference type="HOGENOM" id="CLU_114342_2_3_7"/>
<dbReference type="Proteomes" id="UP000001735">
    <property type="component" value="Chromosome"/>
</dbReference>
<dbReference type="GO" id="GO:0005886">
    <property type="term" value="C:plasma membrane"/>
    <property type="evidence" value="ECO:0007669"/>
    <property type="project" value="UniProtKB-SubCell"/>
</dbReference>
<dbReference type="GO" id="GO:0062054">
    <property type="term" value="F:fluoride channel activity"/>
    <property type="evidence" value="ECO:0007669"/>
    <property type="project" value="UniProtKB-UniRule"/>
</dbReference>
<dbReference type="GO" id="GO:0046872">
    <property type="term" value="F:metal ion binding"/>
    <property type="evidence" value="ECO:0007669"/>
    <property type="project" value="UniProtKB-KW"/>
</dbReference>
<dbReference type="GO" id="GO:0140114">
    <property type="term" value="P:cellular detoxification of fluoride"/>
    <property type="evidence" value="ECO:0007669"/>
    <property type="project" value="UniProtKB-UniRule"/>
</dbReference>
<dbReference type="HAMAP" id="MF_00454">
    <property type="entry name" value="FluC"/>
    <property type="match status" value="1"/>
</dbReference>
<dbReference type="InterPro" id="IPR003691">
    <property type="entry name" value="FluC"/>
</dbReference>
<dbReference type="NCBIfam" id="TIGR00494">
    <property type="entry name" value="crcB"/>
    <property type="match status" value="1"/>
</dbReference>
<dbReference type="PANTHER" id="PTHR28259">
    <property type="entry name" value="FLUORIDE EXPORT PROTEIN 1-RELATED"/>
    <property type="match status" value="1"/>
</dbReference>
<dbReference type="PANTHER" id="PTHR28259:SF18">
    <property type="entry name" value="FLUORIDE-SPECIFIC ION CHANNEL FLUC"/>
    <property type="match status" value="1"/>
</dbReference>
<dbReference type="Pfam" id="PF02537">
    <property type="entry name" value="CRCB"/>
    <property type="match status" value="1"/>
</dbReference>
<sequence length="130" mass="14135">MNFVFLWAALGGAIGSSLRYFVGKMMPSKFLMFESFPLGTFSVNIIGCFVIGFMGHLATKKVFGDDFGIFFVTGVLGGFTTFSSYGLDTLKLLQKSQYIEAISYVLGTNLLGLIGVAIGWFLAKNFVGVH</sequence>
<reference key="1">
    <citation type="journal article" date="2009" name="J. Bacteriol.">
        <title>The complete genome sequence of Helicobacter pylori strain G27.</title>
        <authorList>
            <person name="Baltrus D.A."/>
            <person name="Amieva M.R."/>
            <person name="Covacci A."/>
            <person name="Lowe T.M."/>
            <person name="Merrell D.S."/>
            <person name="Ottemann K.M."/>
            <person name="Stein M."/>
            <person name="Salama N.R."/>
            <person name="Guillemin K."/>
        </authorList>
    </citation>
    <scope>NUCLEOTIDE SEQUENCE [LARGE SCALE GENOMIC DNA]</scope>
    <source>
        <strain>G27</strain>
    </source>
</reference>
<keyword id="KW-0997">Cell inner membrane</keyword>
<keyword id="KW-1003">Cell membrane</keyword>
<keyword id="KW-0407">Ion channel</keyword>
<keyword id="KW-0406">Ion transport</keyword>
<keyword id="KW-0472">Membrane</keyword>
<keyword id="KW-0479">Metal-binding</keyword>
<keyword id="KW-1185">Reference proteome</keyword>
<keyword id="KW-0915">Sodium</keyword>
<keyword id="KW-0812">Transmembrane</keyword>
<keyword id="KW-1133">Transmembrane helix</keyword>
<keyword id="KW-0813">Transport</keyword>
<name>FLUC_HELPG</name>
<organism>
    <name type="scientific">Helicobacter pylori (strain G27)</name>
    <dbReference type="NCBI Taxonomy" id="563041"/>
    <lineage>
        <taxon>Bacteria</taxon>
        <taxon>Pseudomonadati</taxon>
        <taxon>Campylobacterota</taxon>
        <taxon>Epsilonproteobacteria</taxon>
        <taxon>Campylobacterales</taxon>
        <taxon>Helicobacteraceae</taxon>
        <taxon>Helicobacter</taxon>
    </lineage>
</organism>
<proteinExistence type="inferred from homology"/>
<evidence type="ECO:0000255" key="1">
    <source>
        <dbReference type="HAMAP-Rule" id="MF_00454"/>
    </source>
</evidence>
<comment type="function">
    <text evidence="1">Fluoride-specific ion channel. Important for reducing fluoride concentration in the cell, thus reducing its toxicity.</text>
</comment>
<comment type="catalytic activity">
    <reaction evidence="1">
        <text>fluoride(in) = fluoride(out)</text>
        <dbReference type="Rhea" id="RHEA:76159"/>
        <dbReference type="ChEBI" id="CHEBI:17051"/>
    </reaction>
    <physiologicalReaction direction="left-to-right" evidence="1">
        <dbReference type="Rhea" id="RHEA:76160"/>
    </physiologicalReaction>
</comment>
<comment type="activity regulation">
    <text evidence="1">Na(+) is not transported, but it plays an essential structural role and its presence is essential for fluoride channel function.</text>
</comment>
<comment type="subcellular location">
    <subcellularLocation>
        <location evidence="1">Cell inner membrane</location>
        <topology evidence="1">Multi-pass membrane protein</topology>
    </subcellularLocation>
</comment>
<comment type="similarity">
    <text evidence="1">Belongs to the fluoride channel Fluc/FEX (TC 1.A.43) family.</text>
</comment>